<evidence type="ECO:0000255" key="1">
    <source>
        <dbReference type="HAMAP-Rule" id="MF_00739"/>
    </source>
</evidence>
<dbReference type="EC" id="3.5.1.5" evidence="1"/>
<dbReference type="EMBL" id="CP000577">
    <property type="protein sequence ID" value="ABN77058.1"/>
    <property type="molecule type" value="Genomic_DNA"/>
</dbReference>
<dbReference type="RefSeq" id="WP_002720475.1">
    <property type="nucleotide sequence ID" value="NC_009049.1"/>
</dbReference>
<dbReference type="SMR" id="A3PL42"/>
<dbReference type="KEGG" id="rsh:Rsph17029_1954"/>
<dbReference type="HOGENOM" id="CLU_145825_1_0_5"/>
<dbReference type="UniPathway" id="UPA00258">
    <property type="reaction ID" value="UER00370"/>
</dbReference>
<dbReference type="GO" id="GO:0005737">
    <property type="term" value="C:cytoplasm"/>
    <property type="evidence" value="ECO:0007669"/>
    <property type="project" value="UniProtKB-SubCell"/>
</dbReference>
<dbReference type="GO" id="GO:0016151">
    <property type="term" value="F:nickel cation binding"/>
    <property type="evidence" value="ECO:0007669"/>
    <property type="project" value="InterPro"/>
</dbReference>
<dbReference type="GO" id="GO:0009039">
    <property type="term" value="F:urease activity"/>
    <property type="evidence" value="ECO:0007669"/>
    <property type="project" value="UniProtKB-UniRule"/>
</dbReference>
<dbReference type="GO" id="GO:0043419">
    <property type="term" value="P:urea catabolic process"/>
    <property type="evidence" value="ECO:0007669"/>
    <property type="project" value="UniProtKB-UniRule"/>
</dbReference>
<dbReference type="CDD" id="cd00390">
    <property type="entry name" value="Urease_gamma"/>
    <property type="match status" value="1"/>
</dbReference>
<dbReference type="Gene3D" id="3.30.280.10">
    <property type="entry name" value="Urease, gamma-like subunit"/>
    <property type="match status" value="1"/>
</dbReference>
<dbReference type="HAMAP" id="MF_00739">
    <property type="entry name" value="Urease_gamma"/>
    <property type="match status" value="1"/>
</dbReference>
<dbReference type="InterPro" id="IPR012010">
    <property type="entry name" value="Urease_gamma"/>
</dbReference>
<dbReference type="InterPro" id="IPR002026">
    <property type="entry name" value="Urease_gamma/gamma-beta_su"/>
</dbReference>
<dbReference type="InterPro" id="IPR036463">
    <property type="entry name" value="Urease_gamma_sf"/>
</dbReference>
<dbReference type="InterPro" id="IPR050069">
    <property type="entry name" value="Urease_subunit"/>
</dbReference>
<dbReference type="NCBIfam" id="NF009712">
    <property type="entry name" value="PRK13241.1"/>
    <property type="match status" value="1"/>
</dbReference>
<dbReference type="NCBIfam" id="TIGR00193">
    <property type="entry name" value="urease_gam"/>
    <property type="match status" value="1"/>
</dbReference>
<dbReference type="PANTHER" id="PTHR33569">
    <property type="entry name" value="UREASE"/>
    <property type="match status" value="1"/>
</dbReference>
<dbReference type="PANTHER" id="PTHR33569:SF1">
    <property type="entry name" value="UREASE"/>
    <property type="match status" value="1"/>
</dbReference>
<dbReference type="Pfam" id="PF00547">
    <property type="entry name" value="Urease_gamma"/>
    <property type="match status" value="1"/>
</dbReference>
<dbReference type="PIRSF" id="PIRSF001223">
    <property type="entry name" value="Urease_gamma"/>
    <property type="match status" value="1"/>
</dbReference>
<dbReference type="SUPFAM" id="SSF54111">
    <property type="entry name" value="Urease, gamma-subunit"/>
    <property type="match status" value="1"/>
</dbReference>
<protein>
    <recommendedName>
        <fullName evidence="1">Urease subunit gamma</fullName>
        <ecNumber evidence="1">3.5.1.5</ecNumber>
    </recommendedName>
    <alternativeName>
        <fullName evidence="1">Urea amidohydrolase subunit gamma</fullName>
    </alternativeName>
</protein>
<proteinExistence type="inferred from homology"/>
<keyword id="KW-0963">Cytoplasm</keyword>
<keyword id="KW-0378">Hydrolase</keyword>
<comment type="catalytic activity">
    <reaction evidence="1">
        <text>urea + 2 H2O + H(+) = hydrogencarbonate + 2 NH4(+)</text>
        <dbReference type="Rhea" id="RHEA:20557"/>
        <dbReference type="ChEBI" id="CHEBI:15377"/>
        <dbReference type="ChEBI" id="CHEBI:15378"/>
        <dbReference type="ChEBI" id="CHEBI:16199"/>
        <dbReference type="ChEBI" id="CHEBI:17544"/>
        <dbReference type="ChEBI" id="CHEBI:28938"/>
        <dbReference type="EC" id="3.5.1.5"/>
    </reaction>
</comment>
<comment type="pathway">
    <text evidence="1">Nitrogen metabolism; urea degradation; CO(2) and NH(3) from urea (urease route): step 1/1.</text>
</comment>
<comment type="subunit">
    <text evidence="1">Heterotrimer of UreA (gamma), UreB (beta) and UreC (alpha) subunits. Three heterotrimers associate to form the active enzyme.</text>
</comment>
<comment type="subcellular location">
    <subcellularLocation>
        <location evidence="1">Cytoplasm</location>
    </subcellularLocation>
</comment>
<comment type="similarity">
    <text evidence="1">Belongs to the urease gamma subunit family.</text>
</comment>
<reference key="1">
    <citation type="submission" date="2007-02" db="EMBL/GenBank/DDBJ databases">
        <title>Complete sequence of chromosome 1 of Rhodobacter sphaeroides ATCC 17029.</title>
        <authorList>
            <person name="Copeland A."/>
            <person name="Lucas S."/>
            <person name="Lapidus A."/>
            <person name="Barry K."/>
            <person name="Detter J.C."/>
            <person name="Glavina del Rio T."/>
            <person name="Hammon N."/>
            <person name="Israni S."/>
            <person name="Dalin E."/>
            <person name="Tice H."/>
            <person name="Pitluck S."/>
            <person name="Kiss H."/>
            <person name="Brettin T."/>
            <person name="Bruce D."/>
            <person name="Han C."/>
            <person name="Tapia R."/>
            <person name="Gilna P."/>
            <person name="Schmutz J."/>
            <person name="Larimer F."/>
            <person name="Land M."/>
            <person name="Hauser L."/>
            <person name="Kyrpides N."/>
            <person name="Mikhailova N."/>
            <person name="Richardson P."/>
            <person name="Mackenzie C."/>
            <person name="Choudhary M."/>
            <person name="Donohue T.J."/>
            <person name="Kaplan S."/>
        </authorList>
    </citation>
    <scope>NUCLEOTIDE SEQUENCE [LARGE SCALE GENOMIC DNA]</scope>
    <source>
        <strain>ATCC 17029 / ATH 2.4.9</strain>
    </source>
</reference>
<organism>
    <name type="scientific">Cereibacter sphaeroides (strain ATCC 17029 / ATH 2.4.9)</name>
    <name type="common">Rhodobacter sphaeroides</name>
    <dbReference type="NCBI Taxonomy" id="349101"/>
    <lineage>
        <taxon>Bacteria</taxon>
        <taxon>Pseudomonadati</taxon>
        <taxon>Pseudomonadota</taxon>
        <taxon>Alphaproteobacteria</taxon>
        <taxon>Rhodobacterales</taxon>
        <taxon>Paracoccaceae</taxon>
        <taxon>Cereibacter</taxon>
    </lineage>
</organism>
<gene>
    <name evidence="1" type="primary">ureA</name>
    <name type="ordered locus">Rsph17029_1954</name>
</gene>
<sequence length="100" mass="10902">MNLTPREKDKLLISLAAIVARGRLERGVKLNHPEAVALISDFVVEGAREGRSVADLMQAGAHVVRAENCMEGVPEMLHSVQVEATFPDGTKLVTVHHPIR</sequence>
<accession>A3PL42</accession>
<feature type="chain" id="PRO_1000046363" description="Urease subunit gamma">
    <location>
        <begin position="1"/>
        <end position="100"/>
    </location>
</feature>
<name>URE3_CERS1</name>